<dbReference type="EMBL" id="AE009442">
    <property type="protein sequence ID" value="AAO29745.1"/>
    <property type="status" value="ALT_INIT"/>
    <property type="molecule type" value="Genomic_DNA"/>
</dbReference>
<dbReference type="SMR" id="Q87AB3"/>
<dbReference type="KEGG" id="xft:PD_1915"/>
<dbReference type="HOGENOM" id="CLU_054919_3_2_6"/>
<dbReference type="Proteomes" id="UP000002516">
    <property type="component" value="Chromosome"/>
</dbReference>
<dbReference type="GO" id="GO:0005829">
    <property type="term" value="C:cytosol"/>
    <property type="evidence" value="ECO:0007669"/>
    <property type="project" value="TreeGrafter"/>
</dbReference>
<dbReference type="GO" id="GO:0016020">
    <property type="term" value="C:membrane"/>
    <property type="evidence" value="ECO:0007669"/>
    <property type="project" value="TreeGrafter"/>
</dbReference>
<dbReference type="GO" id="GO:0043022">
    <property type="term" value="F:ribosome binding"/>
    <property type="evidence" value="ECO:0007669"/>
    <property type="project" value="TreeGrafter"/>
</dbReference>
<dbReference type="GO" id="GO:0003743">
    <property type="term" value="F:translation initiation factor activity"/>
    <property type="evidence" value="ECO:0007669"/>
    <property type="project" value="UniProtKB-UniRule"/>
</dbReference>
<dbReference type="GO" id="GO:0032790">
    <property type="term" value="P:ribosome disassembly"/>
    <property type="evidence" value="ECO:0007669"/>
    <property type="project" value="TreeGrafter"/>
</dbReference>
<dbReference type="FunFam" id="3.10.20.80:FF:000001">
    <property type="entry name" value="Translation initiation factor IF-3"/>
    <property type="match status" value="1"/>
</dbReference>
<dbReference type="FunFam" id="3.30.110.10:FF:000001">
    <property type="entry name" value="Translation initiation factor IF-3"/>
    <property type="match status" value="1"/>
</dbReference>
<dbReference type="Gene3D" id="3.30.110.10">
    <property type="entry name" value="Translation initiation factor 3 (IF-3), C-terminal domain"/>
    <property type="match status" value="1"/>
</dbReference>
<dbReference type="Gene3D" id="3.10.20.80">
    <property type="entry name" value="Translation initiation factor 3 (IF-3), N-terminal domain"/>
    <property type="match status" value="1"/>
</dbReference>
<dbReference type="HAMAP" id="MF_00080">
    <property type="entry name" value="IF_3"/>
    <property type="match status" value="1"/>
</dbReference>
<dbReference type="InterPro" id="IPR036788">
    <property type="entry name" value="T_IF-3_C_sf"/>
</dbReference>
<dbReference type="InterPro" id="IPR036787">
    <property type="entry name" value="T_IF-3_N_sf"/>
</dbReference>
<dbReference type="InterPro" id="IPR019813">
    <property type="entry name" value="Translation_initiation_fac3_CS"/>
</dbReference>
<dbReference type="InterPro" id="IPR001288">
    <property type="entry name" value="Translation_initiation_fac_3"/>
</dbReference>
<dbReference type="InterPro" id="IPR019815">
    <property type="entry name" value="Translation_initiation_fac_3_C"/>
</dbReference>
<dbReference type="InterPro" id="IPR019814">
    <property type="entry name" value="Translation_initiation_fac_3_N"/>
</dbReference>
<dbReference type="NCBIfam" id="TIGR00168">
    <property type="entry name" value="infC"/>
    <property type="match status" value="1"/>
</dbReference>
<dbReference type="PANTHER" id="PTHR10938">
    <property type="entry name" value="TRANSLATION INITIATION FACTOR IF-3"/>
    <property type="match status" value="1"/>
</dbReference>
<dbReference type="PANTHER" id="PTHR10938:SF0">
    <property type="entry name" value="TRANSLATION INITIATION FACTOR IF-3, MITOCHONDRIAL"/>
    <property type="match status" value="1"/>
</dbReference>
<dbReference type="Pfam" id="PF00707">
    <property type="entry name" value="IF3_C"/>
    <property type="match status" value="1"/>
</dbReference>
<dbReference type="Pfam" id="PF05198">
    <property type="entry name" value="IF3_N"/>
    <property type="match status" value="1"/>
</dbReference>
<dbReference type="SUPFAM" id="SSF55200">
    <property type="entry name" value="Translation initiation factor IF3, C-terminal domain"/>
    <property type="match status" value="1"/>
</dbReference>
<dbReference type="SUPFAM" id="SSF54364">
    <property type="entry name" value="Translation initiation factor IF3, N-terminal domain"/>
    <property type="match status" value="1"/>
</dbReference>
<dbReference type="PROSITE" id="PS00938">
    <property type="entry name" value="IF3"/>
    <property type="match status" value="1"/>
</dbReference>
<evidence type="ECO:0000255" key="1">
    <source>
        <dbReference type="HAMAP-Rule" id="MF_00080"/>
    </source>
</evidence>
<evidence type="ECO:0000305" key="2"/>
<protein>
    <recommendedName>
        <fullName evidence="1">Translation initiation factor IF-3</fullName>
    </recommendedName>
</protein>
<comment type="function">
    <text evidence="1">IF-3 binds to the 30S ribosomal subunit and shifts the equilibrium between 70S ribosomes and their 50S and 30S subunits in favor of the free subunits, thus enhancing the availability of 30S subunits on which protein synthesis initiation begins.</text>
</comment>
<comment type="subunit">
    <text evidence="1">Monomer.</text>
</comment>
<comment type="subcellular location">
    <subcellularLocation>
        <location evidence="1">Cytoplasm</location>
    </subcellularLocation>
</comment>
<comment type="similarity">
    <text evidence="1">Belongs to the IF-3 family.</text>
</comment>
<comment type="sequence caution" evidence="2">
    <conflict type="erroneous initiation">
        <sequence resource="EMBL-CDS" id="AAO29745"/>
    </conflict>
</comment>
<feature type="chain" id="PRO_0000177610" description="Translation initiation factor IF-3">
    <location>
        <begin position="1"/>
        <end position="180"/>
    </location>
</feature>
<proteinExistence type="inferred from homology"/>
<keyword id="KW-0963">Cytoplasm</keyword>
<keyword id="KW-0396">Initiation factor</keyword>
<keyword id="KW-0648">Protein biosynthesis</keyword>
<keyword id="KW-1185">Reference proteome</keyword>
<name>IF3_XYLFT</name>
<sequence length="180" mass="20815">MGDCNISTSDNKQNRKNHEIRVPRVRVIGSDGEMIGVLSRDEALAMAEKEGLDLVEIQPQADPPVCKVMNFGKFKFEQQKKANEAKKKTKQVEIKELKFRPVTDEGDYQIKLRNMRRFLEEGDKVKINIRFRGREMSHQELGRQMAARIEMDLGDDVVIESRPRLEGRQMVMMVAPRKKS</sequence>
<gene>
    <name evidence="1" type="primary">infC</name>
    <name type="ordered locus">PD_1915</name>
</gene>
<reference key="1">
    <citation type="journal article" date="2003" name="J. Bacteriol.">
        <title>Comparative analyses of the complete genome sequences of Pierce's disease and citrus variegated chlorosis strains of Xylella fastidiosa.</title>
        <authorList>
            <person name="Van Sluys M.A."/>
            <person name="de Oliveira M.C."/>
            <person name="Monteiro-Vitorello C.B."/>
            <person name="Miyaki C.Y."/>
            <person name="Furlan L.R."/>
            <person name="Camargo L.E.A."/>
            <person name="da Silva A.C.R."/>
            <person name="Moon D.H."/>
            <person name="Takita M.A."/>
            <person name="Lemos E.G.M."/>
            <person name="Machado M.A."/>
            <person name="Ferro M.I.T."/>
            <person name="da Silva F.R."/>
            <person name="Goldman M.H.S."/>
            <person name="Goldman G.H."/>
            <person name="Lemos M.V.F."/>
            <person name="El-Dorry H."/>
            <person name="Tsai S.M."/>
            <person name="Carrer H."/>
            <person name="Carraro D.M."/>
            <person name="de Oliveira R.C."/>
            <person name="Nunes L.R."/>
            <person name="Siqueira W.J."/>
            <person name="Coutinho L.L."/>
            <person name="Kimura E.T."/>
            <person name="Ferro E.S."/>
            <person name="Harakava R."/>
            <person name="Kuramae E.E."/>
            <person name="Marino C.L."/>
            <person name="Giglioti E."/>
            <person name="Abreu I.L."/>
            <person name="Alves L.M.C."/>
            <person name="do Amaral A.M."/>
            <person name="Baia G.S."/>
            <person name="Blanco S.R."/>
            <person name="Brito M.S."/>
            <person name="Cannavan F.S."/>
            <person name="Celestino A.V."/>
            <person name="da Cunha A.F."/>
            <person name="Fenille R.C."/>
            <person name="Ferro J.A."/>
            <person name="Formighieri E.F."/>
            <person name="Kishi L.T."/>
            <person name="Leoni S.G."/>
            <person name="Oliveira A.R."/>
            <person name="Rosa V.E. Jr."/>
            <person name="Sassaki F.T."/>
            <person name="Sena J.A.D."/>
            <person name="de Souza A.A."/>
            <person name="Truffi D."/>
            <person name="Tsukumo F."/>
            <person name="Yanai G.M."/>
            <person name="Zaros L.G."/>
            <person name="Civerolo E.L."/>
            <person name="Simpson A.J.G."/>
            <person name="Almeida N.F. Jr."/>
            <person name="Setubal J.C."/>
            <person name="Kitajima J.P."/>
        </authorList>
    </citation>
    <scope>NUCLEOTIDE SEQUENCE [LARGE SCALE GENOMIC DNA]</scope>
    <source>
        <strain>Temecula1 / ATCC 700964</strain>
    </source>
</reference>
<organism>
    <name type="scientific">Xylella fastidiosa (strain Temecula1 / ATCC 700964)</name>
    <dbReference type="NCBI Taxonomy" id="183190"/>
    <lineage>
        <taxon>Bacteria</taxon>
        <taxon>Pseudomonadati</taxon>
        <taxon>Pseudomonadota</taxon>
        <taxon>Gammaproteobacteria</taxon>
        <taxon>Lysobacterales</taxon>
        <taxon>Lysobacteraceae</taxon>
        <taxon>Xylella</taxon>
    </lineage>
</organism>
<accession>Q87AB3</accession>